<protein>
    <recommendedName>
        <fullName evidence="1">Large ribosomal subunit protein uL24</fullName>
    </recommendedName>
    <alternativeName>
        <fullName evidence="2">50S ribosomal protein L24</fullName>
    </alternativeName>
</protein>
<dbReference type="EMBL" id="AE016822">
    <property type="protein sequence ID" value="AAT89738.1"/>
    <property type="molecule type" value="Genomic_DNA"/>
</dbReference>
<dbReference type="RefSeq" id="WP_011186724.1">
    <property type="nucleotide sequence ID" value="NC_006087.1"/>
</dbReference>
<dbReference type="SMR" id="Q6AD06"/>
<dbReference type="STRING" id="281090.Lxx20220"/>
<dbReference type="KEGG" id="lxx:Lxx20220"/>
<dbReference type="eggNOG" id="COG0198">
    <property type="taxonomic scope" value="Bacteria"/>
</dbReference>
<dbReference type="HOGENOM" id="CLU_093315_2_0_11"/>
<dbReference type="Proteomes" id="UP000001306">
    <property type="component" value="Chromosome"/>
</dbReference>
<dbReference type="GO" id="GO:1990904">
    <property type="term" value="C:ribonucleoprotein complex"/>
    <property type="evidence" value="ECO:0007669"/>
    <property type="project" value="UniProtKB-KW"/>
</dbReference>
<dbReference type="GO" id="GO:0005840">
    <property type="term" value="C:ribosome"/>
    <property type="evidence" value="ECO:0007669"/>
    <property type="project" value="UniProtKB-KW"/>
</dbReference>
<dbReference type="GO" id="GO:0019843">
    <property type="term" value="F:rRNA binding"/>
    <property type="evidence" value="ECO:0007669"/>
    <property type="project" value="UniProtKB-UniRule"/>
</dbReference>
<dbReference type="GO" id="GO:0003735">
    <property type="term" value="F:structural constituent of ribosome"/>
    <property type="evidence" value="ECO:0007669"/>
    <property type="project" value="InterPro"/>
</dbReference>
<dbReference type="GO" id="GO:0006412">
    <property type="term" value="P:translation"/>
    <property type="evidence" value="ECO:0007669"/>
    <property type="project" value="UniProtKB-UniRule"/>
</dbReference>
<dbReference type="CDD" id="cd06089">
    <property type="entry name" value="KOW_RPL26"/>
    <property type="match status" value="1"/>
</dbReference>
<dbReference type="Gene3D" id="2.30.30.30">
    <property type="match status" value="1"/>
</dbReference>
<dbReference type="HAMAP" id="MF_01326_B">
    <property type="entry name" value="Ribosomal_uL24_B"/>
    <property type="match status" value="1"/>
</dbReference>
<dbReference type="InterPro" id="IPR014722">
    <property type="entry name" value="Rib_uL2_dom2"/>
</dbReference>
<dbReference type="InterPro" id="IPR003256">
    <property type="entry name" value="Ribosomal_uL24"/>
</dbReference>
<dbReference type="InterPro" id="IPR041988">
    <property type="entry name" value="Ribosomal_uL24_KOW"/>
</dbReference>
<dbReference type="InterPro" id="IPR008991">
    <property type="entry name" value="Translation_prot_SH3-like_sf"/>
</dbReference>
<dbReference type="NCBIfam" id="TIGR01079">
    <property type="entry name" value="rplX_bact"/>
    <property type="match status" value="1"/>
</dbReference>
<dbReference type="PANTHER" id="PTHR12903">
    <property type="entry name" value="MITOCHONDRIAL RIBOSOMAL PROTEIN L24"/>
    <property type="match status" value="1"/>
</dbReference>
<dbReference type="Pfam" id="PF17136">
    <property type="entry name" value="ribosomal_L24"/>
    <property type="match status" value="1"/>
</dbReference>
<dbReference type="SUPFAM" id="SSF50104">
    <property type="entry name" value="Translation proteins SH3-like domain"/>
    <property type="match status" value="1"/>
</dbReference>
<name>RL24_LEIXX</name>
<proteinExistence type="inferred from homology"/>
<evidence type="ECO:0000255" key="1">
    <source>
        <dbReference type="HAMAP-Rule" id="MF_01326"/>
    </source>
</evidence>
<evidence type="ECO:0000305" key="2"/>
<comment type="function">
    <text evidence="1">One of two assembly initiator proteins, it binds directly to the 5'-end of the 23S rRNA, where it nucleates assembly of the 50S subunit.</text>
</comment>
<comment type="function">
    <text evidence="1">One of the proteins that surrounds the polypeptide exit tunnel on the outside of the subunit.</text>
</comment>
<comment type="subunit">
    <text evidence="1">Part of the 50S ribosomal subunit.</text>
</comment>
<comment type="similarity">
    <text evidence="1">Belongs to the universal ribosomal protein uL24 family.</text>
</comment>
<gene>
    <name evidence="1" type="primary">rplX</name>
    <name type="ordered locus">Lxx20220</name>
</gene>
<keyword id="KW-1185">Reference proteome</keyword>
<keyword id="KW-0687">Ribonucleoprotein</keyword>
<keyword id="KW-0689">Ribosomal protein</keyword>
<keyword id="KW-0694">RNA-binding</keyword>
<keyword id="KW-0699">rRNA-binding</keyword>
<feature type="chain" id="PRO_0000241615" description="Large ribosomal subunit protein uL24">
    <location>
        <begin position="1"/>
        <end position="119"/>
    </location>
</feature>
<organism>
    <name type="scientific">Leifsonia xyli subsp. xyli (strain CTCB07)</name>
    <dbReference type="NCBI Taxonomy" id="281090"/>
    <lineage>
        <taxon>Bacteria</taxon>
        <taxon>Bacillati</taxon>
        <taxon>Actinomycetota</taxon>
        <taxon>Actinomycetes</taxon>
        <taxon>Micrococcales</taxon>
        <taxon>Microbacteriaceae</taxon>
        <taxon>Leifsonia</taxon>
    </lineage>
</organism>
<reference key="1">
    <citation type="journal article" date="2004" name="Mol. Plant Microbe Interact.">
        <title>The genome sequence of the Gram-positive sugarcane pathogen Leifsonia xyli subsp. xyli.</title>
        <authorList>
            <person name="Monteiro-Vitorello C.B."/>
            <person name="Camargo L.E.A."/>
            <person name="Van Sluys M.A."/>
            <person name="Kitajima J.P."/>
            <person name="Truffi D."/>
            <person name="do Amaral A.M."/>
            <person name="Harakava R."/>
            <person name="de Oliveira J.C.F."/>
            <person name="Wood D."/>
            <person name="de Oliveira M.C."/>
            <person name="Miyaki C.Y."/>
            <person name="Takita M.A."/>
            <person name="da Silva A.C.R."/>
            <person name="Furlan L.R."/>
            <person name="Carraro D.M."/>
            <person name="Camarotte G."/>
            <person name="Almeida N.F. Jr."/>
            <person name="Carrer H."/>
            <person name="Coutinho L.L."/>
            <person name="El-Dorry H.A."/>
            <person name="Ferro M.I.T."/>
            <person name="Gagliardi P.R."/>
            <person name="Giglioti E."/>
            <person name="Goldman M.H.S."/>
            <person name="Goldman G.H."/>
            <person name="Kimura E.T."/>
            <person name="Ferro E.S."/>
            <person name="Kuramae E.E."/>
            <person name="Lemos E.G.M."/>
            <person name="Lemos M.V.F."/>
            <person name="Mauro S.M.Z."/>
            <person name="Machado M.A."/>
            <person name="Marino C.L."/>
            <person name="Menck C.F."/>
            <person name="Nunes L.R."/>
            <person name="Oliveira R.C."/>
            <person name="Pereira G.G."/>
            <person name="Siqueira W."/>
            <person name="de Souza A.A."/>
            <person name="Tsai S.M."/>
            <person name="Zanca A.S."/>
            <person name="Simpson A.J.G."/>
            <person name="Brumbley S.M."/>
            <person name="Setubal J.C."/>
        </authorList>
    </citation>
    <scope>NUCLEOTIDE SEQUENCE [LARGE SCALE GENOMIC DNA]</scope>
    <source>
        <strain>CTCB07</strain>
    </source>
</reference>
<sequence length="119" mass="12975">MANIKKGDLVQVITGRSQARGGDRGKQGRVIEVLVEKNRVIVEGVNFVTKHVRVGQTQRGTKTGGIETHEASIHVSNVALVDPETKKPTRVGFRTETVTKDGVAKTVRVRYAKKSGKDL</sequence>
<accession>Q6AD06</accession>